<gene>
    <name evidence="1" type="primary">bpt</name>
    <name type="ordered locus">Patl_2372</name>
</gene>
<feature type="chain" id="PRO_0000263200" description="Aspartate/glutamate leucyltransferase">
    <location>
        <begin position="1"/>
        <end position="231"/>
    </location>
</feature>
<protein>
    <recommendedName>
        <fullName evidence="1">Aspartate/glutamate leucyltransferase</fullName>
        <ecNumber evidence="1">2.3.2.29</ecNumber>
    </recommendedName>
</protein>
<name>BPT_PSEA6</name>
<keyword id="KW-0012">Acyltransferase</keyword>
<keyword id="KW-0963">Cytoplasm</keyword>
<keyword id="KW-0808">Transferase</keyword>
<comment type="function">
    <text evidence="1">Functions in the N-end rule pathway of protein degradation where it conjugates Leu from its aminoacyl-tRNA to the N-termini of proteins containing an N-terminal aspartate or glutamate.</text>
</comment>
<comment type="catalytic activity">
    <reaction evidence="1">
        <text>N-terminal L-glutamyl-[protein] + L-leucyl-tRNA(Leu) = N-terminal L-leucyl-L-glutamyl-[protein] + tRNA(Leu) + H(+)</text>
        <dbReference type="Rhea" id="RHEA:50412"/>
        <dbReference type="Rhea" id="RHEA-COMP:9613"/>
        <dbReference type="Rhea" id="RHEA-COMP:9622"/>
        <dbReference type="Rhea" id="RHEA-COMP:12664"/>
        <dbReference type="Rhea" id="RHEA-COMP:12668"/>
        <dbReference type="ChEBI" id="CHEBI:15378"/>
        <dbReference type="ChEBI" id="CHEBI:64721"/>
        <dbReference type="ChEBI" id="CHEBI:78442"/>
        <dbReference type="ChEBI" id="CHEBI:78494"/>
        <dbReference type="ChEBI" id="CHEBI:133041"/>
        <dbReference type="EC" id="2.3.2.29"/>
    </reaction>
</comment>
<comment type="catalytic activity">
    <reaction evidence="1">
        <text>N-terminal L-aspartyl-[protein] + L-leucyl-tRNA(Leu) = N-terminal L-leucyl-L-aspartyl-[protein] + tRNA(Leu) + H(+)</text>
        <dbReference type="Rhea" id="RHEA:50420"/>
        <dbReference type="Rhea" id="RHEA-COMP:9613"/>
        <dbReference type="Rhea" id="RHEA-COMP:9622"/>
        <dbReference type="Rhea" id="RHEA-COMP:12669"/>
        <dbReference type="Rhea" id="RHEA-COMP:12674"/>
        <dbReference type="ChEBI" id="CHEBI:15378"/>
        <dbReference type="ChEBI" id="CHEBI:64720"/>
        <dbReference type="ChEBI" id="CHEBI:78442"/>
        <dbReference type="ChEBI" id="CHEBI:78494"/>
        <dbReference type="ChEBI" id="CHEBI:133042"/>
        <dbReference type="EC" id="2.3.2.29"/>
    </reaction>
</comment>
<comment type="subcellular location">
    <subcellularLocation>
        <location evidence="1">Cytoplasm</location>
    </subcellularLocation>
</comment>
<comment type="similarity">
    <text evidence="1">Belongs to the R-transferase family. Bpt subfamily.</text>
</comment>
<accession>Q15TA0</accession>
<reference key="1">
    <citation type="submission" date="2006-06" db="EMBL/GenBank/DDBJ databases">
        <title>Complete sequence of Pseudoalteromonas atlantica T6c.</title>
        <authorList>
            <consortium name="US DOE Joint Genome Institute"/>
            <person name="Copeland A."/>
            <person name="Lucas S."/>
            <person name="Lapidus A."/>
            <person name="Barry K."/>
            <person name="Detter J.C."/>
            <person name="Glavina del Rio T."/>
            <person name="Hammon N."/>
            <person name="Israni S."/>
            <person name="Dalin E."/>
            <person name="Tice H."/>
            <person name="Pitluck S."/>
            <person name="Saunders E."/>
            <person name="Brettin T."/>
            <person name="Bruce D."/>
            <person name="Han C."/>
            <person name="Tapia R."/>
            <person name="Gilna P."/>
            <person name="Schmutz J."/>
            <person name="Larimer F."/>
            <person name="Land M."/>
            <person name="Hauser L."/>
            <person name="Kyrpides N."/>
            <person name="Kim E."/>
            <person name="Karls A.C."/>
            <person name="Bartlett D."/>
            <person name="Higgins B.P."/>
            <person name="Richardson P."/>
        </authorList>
    </citation>
    <scope>NUCLEOTIDE SEQUENCE [LARGE SCALE GENOMIC DNA]</scope>
    <source>
        <strain>T6c / ATCC BAA-1087</strain>
    </source>
</reference>
<evidence type="ECO:0000255" key="1">
    <source>
        <dbReference type="HAMAP-Rule" id="MF_00689"/>
    </source>
</evidence>
<organism>
    <name type="scientific">Pseudoalteromonas atlantica (strain T6c / ATCC BAA-1087)</name>
    <dbReference type="NCBI Taxonomy" id="3042615"/>
    <lineage>
        <taxon>Bacteria</taxon>
        <taxon>Pseudomonadati</taxon>
        <taxon>Pseudomonadota</taxon>
        <taxon>Gammaproteobacteria</taxon>
        <taxon>Alteromonadales</taxon>
        <taxon>Alteromonadaceae</taxon>
        <taxon>Paraglaciecola</taxon>
    </lineage>
</organism>
<dbReference type="EC" id="2.3.2.29" evidence="1"/>
<dbReference type="EMBL" id="CP000388">
    <property type="protein sequence ID" value="ABG40888.1"/>
    <property type="molecule type" value="Genomic_DNA"/>
</dbReference>
<dbReference type="RefSeq" id="WP_011575168.1">
    <property type="nucleotide sequence ID" value="NC_008228.1"/>
</dbReference>
<dbReference type="SMR" id="Q15TA0"/>
<dbReference type="STRING" id="342610.Patl_2372"/>
<dbReference type="KEGG" id="pat:Patl_2372"/>
<dbReference type="eggNOG" id="COG2935">
    <property type="taxonomic scope" value="Bacteria"/>
</dbReference>
<dbReference type="HOGENOM" id="CLU_077607_0_0_6"/>
<dbReference type="OrthoDB" id="9782022at2"/>
<dbReference type="Proteomes" id="UP000001981">
    <property type="component" value="Chromosome"/>
</dbReference>
<dbReference type="GO" id="GO:0005737">
    <property type="term" value="C:cytoplasm"/>
    <property type="evidence" value="ECO:0007669"/>
    <property type="project" value="UniProtKB-SubCell"/>
</dbReference>
<dbReference type="GO" id="GO:0004057">
    <property type="term" value="F:arginyl-tRNA--protein transferase activity"/>
    <property type="evidence" value="ECO:0007669"/>
    <property type="project" value="InterPro"/>
</dbReference>
<dbReference type="GO" id="GO:0008914">
    <property type="term" value="F:leucyl-tRNA--protein transferase activity"/>
    <property type="evidence" value="ECO:0007669"/>
    <property type="project" value="UniProtKB-UniRule"/>
</dbReference>
<dbReference type="GO" id="GO:0071596">
    <property type="term" value="P:ubiquitin-dependent protein catabolic process via the N-end rule pathway"/>
    <property type="evidence" value="ECO:0007669"/>
    <property type="project" value="InterPro"/>
</dbReference>
<dbReference type="HAMAP" id="MF_00689">
    <property type="entry name" value="Bpt"/>
    <property type="match status" value="1"/>
</dbReference>
<dbReference type="InterPro" id="IPR016181">
    <property type="entry name" value="Acyl_CoA_acyltransferase"/>
</dbReference>
<dbReference type="InterPro" id="IPR017138">
    <property type="entry name" value="Asp_Glu_LeuTrfase"/>
</dbReference>
<dbReference type="InterPro" id="IPR030700">
    <property type="entry name" value="N-end_Aminoacyl_Trfase"/>
</dbReference>
<dbReference type="InterPro" id="IPR007472">
    <property type="entry name" value="N-end_Aminoacyl_Trfase_C"/>
</dbReference>
<dbReference type="InterPro" id="IPR007471">
    <property type="entry name" value="N-end_Aminoacyl_Trfase_N"/>
</dbReference>
<dbReference type="NCBIfam" id="NF002341">
    <property type="entry name" value="PRK01305.1-1"/>
    <property type="match status" value="1"/>
</dbReference>
<dbReference type="NCBIfam" id="NF002342">
    <property type="entry name" value="PRK01305.1-3"/>
    <property type="match status" value="1"/>
</dbReference>
<dbReference type="NCBIfam" id="NF002345">
    <property type="entry name" value="PRK01305.2-2"/>
    <property type="match status" value="1"/>
</dbReference>
<dbReference type="NCBIfam" id="NF002346">
    <property type="entry name" value="PRK01305.2-3"/>
    <property type="match status" value="1"/>
</dbReference>
<dbReference type="PANTHER" id="PTHR21367">
    <property type="entry name" value="ARGININE-TRNA-PROTEIN TRANSFERASE 1"/>
    <property type="match status" value="1"/>
</dbReference>
<dbReference type="PANTHER" id="PTHR21367:SF1">
    <property type="entry name" value="ARGINYL-TRNA--PROTEIN TRANSFERASE 1"/>
    <property type="match status" value="1"/>
</dbReference>
<dbReference type="Pfam" id="PF04377">
    <property type="entry name" value="ATE_C"/>
    <property type="match status" value="1"/>
</dbReference>
<dbReference type="Pfam" id="PF04376">
    <property type="entry name" value="ATE_N"/>
    <property type="match status" value="1"/>
</dbReference>
<dbReference type="PIRSF" id="PIRSF037208">
    <property type="entry name" value="ATE_pro_prd"/>
    <property type="match status" value="1"/>
</dbReference>
<dbReference type="SUPFAM" id="SSF55729">
    <property type="entry name" value="Acyl-CoA N-acyltransferases (Nat)"/>
    <property type="match status" value="1"/>
</dbReference>
<proteinExistence type="inferred from homology"/>
<sequence length="231" mass="26641">MKFGISQSFPCSYLPDEQETLLVYAEETEHNTYYEMLMAAGFRRSGAQVYRPHCGACTACQAIRVPVADFAPSKGQKRILKRNSDITVVLSEQDKAHYYSLYEKYINTRHQDGSMYPATPEQYASFAHGDWLDPLYIELHLSGELVGIAVTDALENALSAVYTFFEPSLAERSLGTFAVLQQISIAKRLNKQHLYLGYQIDNCQKMQYKRNFLPHERFIEQKWQLISKKDW</sequence>